<sequence length="228" mass="23848">MPGRTAPTRSEPVPDRAEARTRMVETQLVARGIRDAAVLDAMRAVPREAFVPDALAGEAYGDGPLPIGVGQTISQPYIVALMIEALALRPGDRVLEVGAGCGYAAAVLARMGVQVFAIERHAALGEAARARLAALGLTVSLRIGDGHAGWPEAAPFDAILVSAAGSTIPEALKAQLKPRGRLVIPVGPPGGQTLLRLTRRGRDRFESRDFGPVSFVPLLRGVGTADPV</sequence>
<reference key="1">
    <citation type="submission" date="2007-12" db="EMBL/GenBank/DDBJ databases">
        <title>Complete sequence of Methylobacterium extorquens PA1.</title>
        <authorList>
            <consortium name="US DOE Joint Genome Institute"/>
            <person name="Copeland A."/>
            <person name="Lucas S."/>
            <person name="Lapidus A."/>
            <person name="Barry K."/>
            <person name="Glavina del Rio T."/>
            <person name="Dalin E."/>
            <person name="Tice H."/>
            <person name="Pitluck S."/>
            <person name="Saunders E."/>
            <person name="Brettin T."/>
            <person name="Bruce D."/>
            <person name="Detter J.C."/>
            <person name="Han C."/>
            <person name="Schmutz J."/>
            <person name="Larimer F."/>
            <person name="Land M."/>
            <person name="Hauser L."/>
            <person name="Kyrpides N."/>
            <person name="Kim E."/>
            <person name="Marx C."/>
            <person name="Richardson P."/>
        </authorList>
    </citation>
    <scope>NUCLEOTIDE SEQUENCE [LARGE SCALE GENOMIC DNA]</scope>
    <source>
        <strain>PA1</strain>
    </source>
</reference>
<comment type="function">
    <text evidence="1">Catalyzes the methyl esterification of L-isoaspartyl residues in peptides and proteins that result from spontaneous decomposition of normal L-aspartyl and L-asparaginyl residues. It plays a role in the repair and/or degradation of damaged proteins.</text>
</comment>
<comment type="catalytic activity">
    <reaction evidence="1">
        <text>[protein]-L-isoaspartate + S-adenosyl-L-methionine = [protein]-L-isoaspartate alpha-methyl ester + S-adenosyl-L-homocysteine</text>
        <dbReference type="Rhea" id="RHEA:12705"/>
        <dbReference type="Rhea" id="RHEA-COMP:12143"/>
        <dbReference type="Rhea" id="RHEA-COMP:12144"/>
        <dbReference type="ChEBI" id="CHEBI:57856"/>
        <dbReference type="ChEBI" id="CHEBI:59789"/>
        <dbReference type="ChEBI" id="CHEBI:90596"/>
        <dbReference type="ChEBI" id="CHEBI:90598"/>
        <dbReference type="EC" id="2.1.1.77"/>
    </reaction>
</comment>
<comment type="subcellular location">
    <subcellularLocation>
        <location evidence="1">Cytoplasm</location>
    </subcellularLocation>
</comment>
<comment type="similarity">
    <text evidence="1">Belongs to the methyltransferase superfamily. L-isoaspartyl/D-aspartyl protein methyltransferase family.</text>
</comment>
<gene>
    <name evidence="1" type="primary">pcm</name>
    <name type="ordered locus">Mext_4262</name>
</gene>
<dbReference type="EC" id="2.1.1.77" evidence="1"/>
<dbReference type="EMBL" id="CP000908">
    <property type="protein sequence ID" value="ABY32631.1"/>
    <property type="molecule type" value="Genomic_DNA"/>
</dbReference>
<dbReference type="RefSeq" id="WP_012255374.1">
    <property type="nucleotide sequence ID" value="NC_010172.1"/>
</dbReference>
<dbReference type="SMR" id="A9VY77"/>
<dbReference type="KEGG" id="mex:Mext_4262"/>
<dbReference type="eggNOG" id="COG2518">
    <property type="taxonomic scope" value="Bacteria"/>
</dbReference>
<dbReference type="HOGENOM" id="CLU_055432_2_0_5"/>
<dbReference type="GO" id="GO:0005737">
    <property type="term" value="C:cytoplasm"/>
    <property type="evidence" value="ECO:0007669"/>
    <property type="project" value="UniProtKB-SubCell"/>
</dbReference>
<dbReference type="GO" id="GO:0004719">
    <property type="term" value="F:protein-L-isoaspartate (D-aspartate) O-methyltransferase activity"/>
    <property type="evidence" value="ECO:0007669"/>
    <property type="project" value="UniProtKB-UniRule"/>
</dbReference>
<dbReference type="GO" id="GO:0032259">
    <property type="term" value="P:methylation"/>
    <property type="evidence" value="ECO:0007669"/>
    <property type="project" value="UniProtKB-KW"/>
</dbReference>
<dbReference type="GO" id="GO:0036211">
    <property type="term" value="P:protein modification process"/>
    <property type="evidence" value="ECO:0007669"/>
    <property type="project" value="UniProtKB-UniRule"/>
</dbReference>
<dbReference type="GO" id="GO:0030091">
    <property type="term" value="P:protein repair"/>
    <property type="evidence" value="ECO:0007669"/>
    <property type="project" value="UniProtKB-UniRule"/>
</dbReference>
<dbReference type="FunFam" id="3.40.50.150:FF:000010">
    <property type="entry name" value="Protein-L-isoaspartate O-methyltransferase"/>
    <property type="match status" value="1"/>
</dbReference>
<dbReference type="Gene3D" id="3.40.50.150">
    <property type="entry name" value="Vaccinia Virus protein VP39"/>
    <property type="match status" value="1"/>
</dbReference>
<dbReference type="HAMAP" id="MF_00090">
    <property type="entry name" value="PIMT"/>
    <property type="match status" value="1"/>
</dbReference>
<dbReference type="InterPro" id="IPR000682">
    <property type="entry name" value="PCMT"/>
</dbReference>
<dbReference type="InterPro" id="IPR029063">
    <property type="entry name" value="SAM-dependent_MTases_sf"/>
</dbReference>
<dbReference type="NCBIfam" id="TIGR00080">
    <property type="entry name" value="pimt"/>
    <property type="match status" value="1"/>
</dbReference>
<dbReference type="NCBIfam" id="NF001453">
    <property type="entry name" value="PRK00312.1"/>
    <property type="match status" value="1"/>
</dbReference>
<dbReference type="PANTHER" id="PTHR11579">
    <property type="entry name" value="PROTEIN-L-ISOASPARTATE O-METHYLTRANSFERASE"/>
    <property type="match status" value="1"/>
</dbReference>
<dbReference type="PANTHER" id="PTHR11579:SF0">
    <property type="entry name" value="PROTEIN-L-ISOASPARTATE(D-ASPARTATE) O-METHYLTRANSFERASE"/>
    <property type="match status" value="1"/>
</dbReference>
<dbReference type="Pfam" id="PF01135">
    <property type="entry name" value="PCMT"/>
    <property type="match status" value="1"/>
</dbReference>
<dbReference type="SUPFAM" id="SSF53335">
    <property type="entry name" value="S-adenosyl-L-methionine-dependent methyltransferases"/>
    <property type="match status" value="1"/>
</dbReference>
<dbReference type="PROSITE" id="PS01279">
    <property type="entry name" value="PCMT"/>
    <property type="match status" value="1"/>
</dbReference>
<protein>
    <recommendedName>
        <fullName evidence="1">Protein-L-isoaspartate O-methyltransferase</fullName>
        <ecNumber evidence="1">2.1.1.77</ecNumber>
    </recommendedName>
    <alternativeName>
        <fullName evidence="1">L-isoaspartyl protein carboxyl methyltransferase</fullName>
    </alternativeName>
    <alternativeName>
        <fullName evidence="1">Protein L-isoaspartyl methyltransferase</fullName>
    </alternativeName>
    <alternativeName>
        <fullName evidence="1">Protein-beta-aspartate methyltransferase</fullName>
        <shortName evidence="1">PIMT</shortName>
    </alternativeName>
</protein>
<accession>A9VY77</accession>
<feature type="chain" id="PRO_0000351880" description="Protein-L-isoaspartate O-methyltransferase">
    <location>
        <begin position="1"/>
        <end position="228"/>
    </location>
</feature>
<feature type="active site" evidence="1">
    <location>
        <position position="74"/>
    </location>
</feature>
<name>PIMT_METEP</name>
<keyword id="KW-0963">Cytoplasm</keyword>
<keyword id="KW-0489">Methyltransferase</keyword>
<keyword id="KW-0949">S-adenosyl-L-methionine</keyword>
<keyword id="KW-0808">Transferase</keyword>
<evidence type="ECO:0000255" key="1">
    <source>
        <dbReference type="HAMAP-Rule" id="MF_00090"/>
    </source>
</evidence>
<organism>
    <name type="scientific">Methylorubrum extorquens (strain PA1)</name>
    <name type="common">Methylobacterium extorquens</name>
    <dbReference type="NCBI Taxonomy" id="419610"/>
    <lineage>
        <taxon>Bacteria</taxon>
        <taxon>Pseudomonadati</taxon>
        <taxon>Pseudomonadota</taxon>
        <taxon>Alphaproteobacteria</taxon>
        <taxon>Hyphomicrobiales</taxon>
        <taxon>Methylobacteriaceae</taxon>
        <taxon>Methylorubrum</taxon>
    </lineage>
</organism>
<proteinExistence type="inferred from homology"/>